<gene>
    <name type="primary">zc3hc1</name>
    <name type="synonym">nipa</name>
</gene>
<protein>
    <recommendedName>
        <fullName>Zinc finger C3HC-type protein 1-like</fullName>
    </recommendedName>
    <alternativeName>
        <fullName>NIPA-like protein</fullName>
    </alternativeName>
</protein>
<accession>Q6P7H4</accession>
<evidence type="ECO:0000250" key="1">
    <source>
        <dbReference type="UniProtKB" id="Q86WB0"/>
    </source>
</evidence>
<evidence type="ECO:0000256" key="2">
    <source>
        <dbReference type="SAM" id="MobiDB-lite"/>
    </source>
</evidence>
<evidence type="ECO:0000269" key="3">
    <source>
    </source>
</evidence>
<reference key="1">
    <citation type="submission" date="2003-11" db="EMBL/GenBank/DDBJ databases">
        <authorList>
            <consortium name="NIH - Xenopus Gene Collection (XGC) project"/>
        </authorList>
    </citation>
    <scope>NUCLEOTIDE SEQUENCE [LARGE SCALE MRNA]</scope>
    <source>
        <tissue>Kidney</tissue>
    </source>
</reference>
<reference key="2">
    <citation type="journal article" date="2021" name="Cells">
        <title>ZC3HC1 Is a Novel Inherent Component of the Nuclear Basket, Resident in a State of Reciprocal Dependence with TPR.</title>
        <authorList>
            <person name="Gunkel P."/>
            <person name="Iino H."/>
            <person name="Krull S."/>
            <person name="Cordes V.C."/>
        </authorList>
    </citation>
    <scope>SUBCELLULAR LOCATION</scope>
</reference>
<organism>
    <name type="scientific">Xenopus laevis</name>
    <name type="common">African clawed frog</name>
    <dbReference type="NCBI Taxonomy" id="8355"/>
    <lineage>
        <taxon>Eukaryota</taxon>
        <taxon>Metazoa</taxon>
        <taxon>Chordata</taxon>
        <taxon>Craniata</taxon>
        <taxon>Vertebrata</taxon>
        <taxon>Euteleostomi</taxon>
        <taxon>Amphibia</taxon>
        <taxon>Batrachia</taxon>
        <taxon>Anura</taxon>
        <taxon>Pipoidea</taxon>
        <taxon>Pipidae</taxon>
        <taxon>Xenopodinae</taxon>
        <taxon>Xenopus</taxon>
        <taxon>Xenopus</taxon>
    </lineage>
</organism>
<sequence>MATTCEEVLVSPVKSTAVTPLKIRELINEGIVCGERSGIGRKEASETPEENTAFEDLPGNNSYESTSKDAFFSRVESFSSLKWAGKPPELCPLICAKYGWCNIECDMLKCSSCNAYLCASLQPILDFSKYKQRCVELQEALRKAHEKFCFWPDSPCPEHFWALLVTEPSSVLSDFVERFHNLCHLEMQLPSLKHEDVKSMDITEDTVSRLLRLIEDELKPKEGREANSHSLPSDSLQVHISACILALCGWNTSFSSGSLCIINCPRCMRKVGLWAFQQLETVELDNSLSAPGTPVSPAEGHERSPLGFMSPSRRVTRSRDAEQSPAFAYGRTRSSDLLSPADSEAVRNRPVTRSMGQGENTGLGNELHSSPHRRAKRPRLCSSSSSDTSPRSCFDPLSQHRSWCPWVNVCQASGTNTMGSEIQEEARRKEYGWKEVLKVLLAEENSRTISNPDTSSVPEKSHKVFRIFRQWQLAASS</sequence>
<proteinExistence type="evidence at transcript level"/>
<feature type="chain" id="PRO_0000096852" description="Zinc finger C3HC-type protein 1-like">
    <location>
        <begin position="1"/>
        <end position="477"/>
    </location>
</feature>
<feature type="zinc finger region" description="C3HC-type">
    <location>
        <begin position="95"/>
        <end position="149"/>
    </location>
</feature>
<feature type="region of interest" description="Disordered" evidence="2">
    <location>
        <begin position="287"/>
        <end position="392"/>
    </location>
</feature>
<feature type="compositionally biased region" description="Polar residues" evidence="2">
    <location>
        <begin position="354"/>
        <end position="363"/>
    </location>
</feature>
<feature type="compositionally biased region" description="Basic residues" evidence="2">
    <location>
        <begin position="370"/>
        <end position="379"/>
    </location>
</feature>
<feature type="compositionally biased region" description="Low complexity" evidence="2">
    <location>
        <begin position="382"/>
        <end position="392"/>
    </location>
</feature>
<keyword id="KW-0131">Cell cycle</keyword>
<keyword id="KW-0132">Cell division</keyword>
<keyword id="KW-0479">Metal-binding</keyword>
<keyword id="KW-0498">Mitosis</keyword>
<keyword id="KW-0539">Nucleus</keyword>
<keyword id="KW-1185">Reference proteome</keyword>
<keyword id="KW-0833">Ubl conjugation pathway</keyword>
<keyword id="KW-0862">Zinc</keyword>
<keyword id="KW-0863">Zinc-finger</keyword>
<comment type="function">
    <text evidence="1">Required for proper positioning of a substantial amount of TPR at the nuclear basket (NB) through interaction with TPR.</text>
</comment>
<comment type="subcellular location">
    <subcellularLocation>
        <location evidence="1">Nucleus</location>
    </subcellularLocation>
    <subcellularLocation>
        <location evidence="1">Nucleus envelope</location>
    </subcellularLocation>
    <text evidence="1 3">Resident of the nuclear basket (NB). Occurs at the nuclear envelopes (NE) of all TPR-containing cell types, including proliferating and non-dividing, terminally differentiated cells of different morphogenetic origin (By similarity). Primarily located at the distal end, in the terminal ring (TR) region, of the nuclear pore complex (NPC)-attached nuclear basket (NB) (PubMed:34440706).</text>
</comment>
<comment type="PTM">
    <text evidence="1">Phosphorylated. May also be weakly phosphorylated on Tyr residues.</text>
</comment>
<name>ZC3C1_XENLA</name>
<dbReference type="EMBL" id="BC061669">
    <property type="protein sequence ID" value="AAH61669.1"/>
    <property type="molecule type" value="mRNA"/>
</dbReference>
<dbReference type="RefSeq" id="NP_001083590.1">
    <property type="nucleotide sequence ID" value="NM_001090121.1"/>
</dbReference>
<dbReference type="DNASU" id="399009"/>
<dbReference type="GeneID" id="399009"/>
<dbReference type="KEGG" id="xla:399009"/>
<dbReference type="AGR" id="Xenbase:XB-GENE-948891"/>
<dbReference type="CTD" id="399009"/>
<dbReference type="Xenbase" id="XB-GENE-948891">
    <property type="gene designation" value="zc3hc1.L"/>
</dbReference>
<dbReference type="OrthoDB" id="614844at2759"/>
<dbReference type="Proteomes" id="UP000186698">
    <property type="component" value="Chromosome 3L"/>
</dbReference>
<dbReference type="Bgee" id="399009">
    <property type="expression patterns" value="Expressed in neurula embryo and 19 other cell types or tissues"/>
</dbReference>
<dbReference type="GO" id="GO:0044615">
    <property type="term" value="C:nuclear pore nuclear basket"/>
    <property type="evidence" value="ECO:0000314"/>
    <property type="project" value="UniProtKB"/>
</dbReference>
<dbReference type="GO" id="GO:0005634">
    <property type="term" value="C:nucleus"/>
    <property type="evidence" value="ECO:0000318"/>
    <property type="project" value="GO_Central"/>
</dbReference>
<dbReference type="GO" id="GO:0008270">
    <property type="term" value="F:zinc ion binding"/>
    <property type="evidence" value="ECO:0007669"/>
    <property type="project" value="UniProtKB-KW"/>
</dbReference>
<dbReference type="GO" id="GO:0051301">
    <property type="term" value="P:cell division"/>
    <property type="evidence" value="ECO:0007669"/>
    <property type="project" value="UniProtKB-KW"/>
</dbReference>
<dbReference type="GO" id="GO:0016567">
    <property type="term" value="P:protein ubiquitination"/>
    <property type="evidence" value="ECO:0007669"/>
    <property type="project" value="UniProtKB-UniPathway"/>
</dbReference>
<dbReference type="InterPro" id="IPR013909">
    <property type="entry name" value="NuBaID_C"/>
</dbReference>
<dbReference type="InterPro" id="IPR012935">
    <property type="entry name" value="NuBaID_N"/>
</dbReference>
<dbReference type="PANTHER" id="PTHR15835">
    <property type="entry name" value="NUCLEAR-INTERACTING PARTNER OF ALK"/>
    <property type="match status" value="1"/>
</dbReference>
<dbReference type="PANTHER" id="PTHR15835:SF6">
    <property type="entry name" value="ZINC FINGER C3HC-TYPE PROTEIN 1"/>
    <property type="match status" value="1"/>
</dbReference>
<dbReference type="Pfam" id="PF08600">
    <property type="entry name" value="NuBaID_C"/>
    <property type="match status" value="1"/>
</dbReference>
<dbReference type="Pfam" id="PF07967">
    <property type="entry name" value="zf-C3HC"/>
    <property type="match status" value="1"/>
</dbReference>